<evidence type="ECO:0000255" key="1">
    <source>
        <dbReference type="HAMAP-Rule" id="MF_01456"/>
    </source>
</evidence>
<gene>
    <name evidence="1" type="primary">nuoK</name>
    <name type="ordered locus">RPB_1356</name>
</gene>
<keyword id="KW-0997">Cell inner membrane</keyword>
<keyword id="KW-1003">Cell membrane</keyword>
<keyword id="KW-0472">Membrane</keyword>
<keyword id="KW-0520">NAD</keyword>
<keyword id="KW-0874">Quinone</keyword>
<keyword id="KW-1185">Reference proteome</keyword>
<keyword id="KW-1278">Translocase</keyword>
<keyword id="KW-0812">Transmembrane</keyword>
<keyword id="KW-1133">Transmembrane helix</keyword>
<keyword id="KW-0813">Transport</keyword>
<keyword id="KW-0830">Ubiquinone</keyword>
<accession>Q2J0E4</accession>
<proteinExistence type="inferred from homology"/>
<feature type="chain" id="PRO_0000390209" description="NADH-quinone oxidoreductase subunit K">
    <location>
        <begin position="1"/>
        <end position="102"/>
    </location>
</feature>
<feature type="transmembrane region" description="Helical" evidence="1">
    <location>
        <begin position="6"/>
        <end position="26"/>
    </location>
</feature>
<feature type="transmembrane region" description="Helical" evidence="1">
    <location>
        <begin position="30"/>
        <end position="50"/>
    </location>
</feature>
<feature type="transmembrane region" description="Helical" evidence="1">
    <location>
        <begin position="63"/>
        <end position="83"/>
    </location>
</feature>
<dbReference type="EC" id="7.1.1.-" evidence="1"/>
<dbReference type="EMBL" id="CP000250">
    <property type="protein sequence ID" value="ABD06066.1"/>
    <property type="molecule type" value="Genomic_DNA"/>
</dbReference>
<dbReference type="RefSeq" id="WP_011440254.1">
    <property type="nucleotide sequence ID" value="NC_007778.1"/>
</dbReference>
<dbReference type="SMR" id="Q2J0E4"/>
<dbReference type="STRING" id="316058.RPB_1356"/>
<dbReference type="KEGG" id="rpb:RPB_1356"/>
<dbReference type="eggNOG" id="COG0713">
    <property type="taxonomic scope" value="Bacteria"/>
</dbReference>
<dbReference type="HOGENOM" id="CLU_144724_0_1_5"/>
<dbReference type="OrthoDB" id="9810120at2"/>
<dbReference type="Proteomes" id="UP000008809">
    <property type="component" value="Chromosome"/>
</dbReference>
<dbReference type="GO" id="GO:0030964">
    <property type="term" value="C:NADH dehydrogenase complex"/>
    <property type="evidence" value="ECO:0007669"/>
    <property type="project" value="TreeGrafter"/>
</dbReference>
<dbReference type="GO" id="GO:0005886">
    <property type="term" value="C:plasma membrane"/>
    <property type="evidence" value="ECO:0007669"/>
    <property type="project" value="UniProtKB-SubCell"/>
</dbReference>
<dbReference type="GO" id="GO:0050136">
    <property type="term" value="F:NADH:ubiquinone reductase (non-electrogenic) activity"/>
    <property type="evidence" value="ECO:0007669"/>
    <property type="project" value="UniProtKB-UniRule"/>
</dbReference>
<dbReference type="GO" id="GO:0048038">
    <property type="term" value="F:quinone binding"/>
    <property type="evidence" value="ECO:0007669"/>
    <property type="project" value="UniProtKB-KW"/>
</dbReference>
<dbReference type="GO" id="GO:0042773">
    <property type="term" value="P:ATP synthesis coupled electron transport"/>
    <property type="evidence" value="ECO:0007669"/>
    <property type="project" value="InterPro"/>
</dbReference>
<dbReference type="Gene3D" id="1.10.287.3510">
    <property type="match status" value="1"/>
</dbReference>
<dbReference type="HAMAP" id="MF_01456">
    <property type="entry name" value="NDH1_NuoK"/>
    <property type="match status" value="1"/>
</dbReference>
<dbReference type="InterPro" id="IPR001133">
    <property type="entry name" value="NADH_UbQ_OxRdtase_chain4L/K"/>
</dbReference>
<dbReference type="InterPro" id="IPR039428">
    <property type="entry name" value="NUOK/Mnh_C1-like"/>
</dbReference>
<dbReference type="NCBIfam" id="NF004320">
    <property type="entry name" value="PRK05715.1-2"/>
    <property type="match status" value="1"/>
</dbReference>
<dbReference type="PANTHER" id="PTHR11434:SF16">
    <property type="entry name" value="NADH-UBIQUINONE OXIDOREDUCTASE CHAIN 4L"/>
    <property type="match status" value="1"/>
</dbReference>
<dbReference type="PANTHER" id="PTHR11434">
    <property type="entry name" value="NADH-UBIQUINONE OXIDOREDUCTASE SUBUNIT ND4L"/>
    <property type="match status" value="1"/>
</dbReference>
<dbReference type="Pfam" id="PF00420">
    <property type="entry name" value="Oxidored_q2"/>
    <property type="match status" value="1"/>
</dbReference>
<sequence>MTGSDLIGMMILAAGLFAIGLFGVLARRGILFQLVALEVALSGPALAFVAAGAYHADPQGQGMLILVLTLAAAEVAVGLALLLRIRRTAGSDDSDVISGMKG</sequence>
<name>NUOK_RHOP2</name>
<reference key="1">
    <citation type="submission" date="2006-01" db="EMBL/GenBank/DDBJ databases">
        <title>Complete sequence of Rhodopseudomonas palustris HaA2.</title>
        <authorList>
            <consortium name="US DOE Joint Genome Institute"/>
            <person name="Copeland A."/>
            <person name="Lucas S."/>
            <person name="Lapidus A."/>
            <person name="Barry K."/>
            <person name="Detter J.C."/>
            <person name="Glavina T."/>
            <person name="Hammon N."/>
            <person name="Israni S."/>
            <person name="Pitluck S."/>
            <person name="Chain P."/>
            <person name="Malfatti S."/>
            <person name="Shin M."/>
            <person name="Vergez L."/>
            <person name="Schmutz J."/>
            <person name="Larimer F."/>
            <person name="Land M."/>
            <person name="Hauser L."/>
            <person name="Pelletier D.A."/>
            <person name="Kyrpides N."/>
            <person name="Anderson I."/>
            <person name="Oda Y."/>
            <person name="Harwood C.S."/>
            <person name="Richardson P."/>
        </authorList>
    </citation>
    <scope>NUCLEOTIDE SEQUENCE [LARGE SCALE GENOMIC DNA]</scope>
    <source>
        <strain>HaA2</strain>
    </source>
</reference>
<comment type="function">
    <text evidence="1">NDH-1 shuttles electrons from NADH, via FMN and iron-sulfur (Fe-S) centers, to quinones in the respiratory chain. The immediate electron acceptor for the enzyme in this species is believed to be ubiquinone. Couples the redox reaction to proton translocation (for every two electrons transferred, four hydrogen ions are translocated across the cytoplasmic membrane), and thus conserves the redox energy in a proton gradient.</text>
</comment>
<comment type="catalytic activity">
    <reaction evidence="1">
        <text>a quinone + NADH + 5 H(+)(in) = a quinol + NAD(+) + 4 H(+)(out)</text>
        <dbReference type="Rhea" id="RHEA:57888"/>
        <dbReference type="ChEBI" id="CHEBI:15378"/>
        <dbReference type="ChEBI" id="CHEBI:24646"/>
        <dbReference type="ChEBI" id="CHEBI:57540"/>
        <dbReference type="ChEBI" id="CHEBI:57945"/>
        <dbReference type="ChEBI" id="CHEBI:132124"/>
    </reaction>
</comment>
<comment type="subunit">
    <text evidence="1">NDH-1 is composed of 14 different subunits. Subunits NuoA, H, J, K, L, M, N constitute the membrane sector of the complex.</text>
</comment>
<comment type="subcellular location">
    <subcellularLocation>
        <location evidence="1">Cell inner membrane</location>
        <topology evidence="1">Multi-pass membrane protein</topology>
    </subcellularLocation>
</comment>
<comment type="similarity">
    <text evidence="1">Belongs to the complex I subunit 4L family.</text>
</comment>
<organism>
    <name type="scientific">Rhodopseudomonas palustris (strain HaA2)</name>
    <dbReference type="NCBI Taxonomy" id="316058"/>
    <lineage>
        <taxon>Bacteria</taxon>
        <taxon>Pseudomonadati</taxon>
        <taxon>Pseudomonadota</taxon>
        <taxon>Alphaproteobacteria</taxon>
        <taxon>Hyphomicrobiales</taxon>
        <taxon>Nitrobacteraceae</taxon>
        <taxon>Rhodopseudomonas</taxon>
    </lineage>
</organism>
<protein>
    <recommendedName>
        <fullName evidence="1">NADH-quinone oxidoreductase subunit K</fullName>
        <ecNumber evidence="1">7.1.1.-</ecNumber>
    </recommendedName>
    <alternativeName>
        <fullName evidence="1">NADH dehydrogenase I subunit K</fullName>
    </alternativeName>
    <alternativeName>
        <fullName evidence="1">NDH-1 subunit K</fullName>
    </alternativeName>
</protein>